<accession>Q9QWY8</accession>
<accession>O08612</accession>
<accession>Q505F0</accession>
<accession>Q80TG8</accession>
<accession>Q80UV6</accession>
<accession>Q99LV8</accession>
<accession>Q9Z2B6</accession>
<comment type="function">
    <text evidence="1 3">May function as a signal transduction protein involved in the differentiation of fibroblasts into adipocytes and possibly other cell types. Possesses phosphatidylinositol 4,5-bisphosphate-dependent GTPase-activating protein activity for ARF1 (ADP ribosylation factor 1) and ARF5 and a lesser activity towards ARF6. May coordinate membrane trafficking with cell growth or actin cytoskeleton remodeling by binding to both SRC and PIP2. Part of the ciliary targeting complex containing Rab11, ASAP1, Rabin8/RAB3IP, RAB11FIP3 and ARF4, which direct preciliary vesicle trafficking to mother centriole and ciliogenesis initiation (By similarity).</text>
</comment>
<comment type="activity regulation">
    <text>Activity stimulated by phosphatidylinositol 4,5-bisphosphate (PIP2).</text>
</comment>
<comment type="subunit">
    <text evidence="3 9 10 11">Homodimer. Interacts with SRC and CRK. Interacts with RAB11FIP3. Interacts with PTK2B/PYK2. Interacts with REPS2; the interaction is direct (PubMed:12149250). Forms a complex containing RAB11A, ASAP1, RAB3IP, RAP11FIP3 and ARF4; the complex promotes preciliary trafficking; the complex binds to RHO in photoreceptor cells and promotes RHO ciliary transport (By similarity).</text>
</comment>
<comment type="interaction">
    <interactant intactId="EBI-698517">
        <id>Q9QWY8-1</id>
    </interactant>
    <interactant intactId="EBI-848039">
        <id>P00523</id>
        <label>SRC</label>
    </interactant>
    <organismsDiffer>true</organismsDiffer>
    <experiments>3</experiments>
</comment>
<comment type="interaction">
    <interactant intactId="EBI-698524">
        <id>Q9QWY8-2</id>
    </interactant>
    <interactant intactId="EBI-848039">
        <id>P00523</id>
        <label>SRC</label>
    </interactant>
    <organismsDiffer>true</organismsDiffer>
    <experiments>2</experiments>
</comment>
<comment type="subcellular location">
    <subcellularLocation>
        <location>Cytoplasm</location>
    </subcellularLocation>
    <subcellularLocation>
        <location>Membrane</location>
    </subcellularLocation>
    <subcellularLocation>
        <location evidence="3">Golgi apparatus</location>
    </subcellularLocation>
    <subcellularLocation>
        <location evidence="3">Golgi apparatus</location>
        <location evidence="3">trans-Golgi network</location>
    </subcellularLocation>
    <text>Predominantly cytoplasmic. Partially membrane-associated.</text>
</comment>
<comment type="alternative products">
    <event type="alternative splicing"/>
    <isoform>
        <id>Q9QWY8-1</id>
        <name>1</name>
        <name>SHAG1a</name>
        <name>ASAP1a</name>
        <sequence type="displayed"/>
    </isoform>
    <isoform>
        <id>Q9QWY8-2</id>
        <name>2</name>
        <name>SHAG1b</name>
        <name>ASAP1b</name>
        <sequence type="described" ref="VSP_008368"/>
    </isoform>
    <isoform>
        <id>Q9QWY8-3</id>
        <name>3</name>
        <sequence type="described" ref="VSP_008366"/>
    </isoform>
    <isoform>
        <id>Q9QWY8-4</id>
        <name>4</name>
        <sequence type="described" ref="VSP_008367"/>
    </isoform>
</comment>
<comment type="tissue specificity">
    <text evidence="8">Expressed in all tissues examined but a most abundant expression was found in the testis, brain, lung and spleen. A heightened expression was seen in the adipose tissue from obese (ob) and diabetic (db) animals.</text>
</comment>
<comment type="domain">
    <text>The PH domain most probably contributes to the phosphoinositide-dependent regulation of ADP ribosylation factors.</text>
</comment>
<comment type="PTM">
    <text evidence="10">Phosphorylated on tyrosine residues by SRC.</text>
</comment>
<comment type="sequence caution" evidence="16">
    <conflict type="erroneous initiation">
        <sequence resource="EMBL-CDS" id="AAH02201"/>
    </conflict>
    <text>Extended N-terminus.</text>
</comment>
<comment type="sequence caution" evidence="16">
    <conflict type="erroneous initiation">
        <sequence resource="EMBL-CDS" id="AAH48818"/>
    </conflict>
    <text>Extended N-terminus.</text>
</comment>
<keyword id="KW-0002">3D-structure</keyword>
<keyword id="KW-0025">Alternative splicing</keyword>
<keyword id="KW-0040">ANK repeat</keyword>
<keyword id="KW-0970">Cilium biogenesis/degradation</keyword>
<keyword id="KW-0963">Cytoplasm</keyword>
<keyword id="KW-0333">Golgi apparatus</keyword>
<keyword id="KW-0343">GTPase activation</keyword>
<keyword id="KW-0472">Membrane</keyword>
<keyword id="KW-0479">Metal-binding</keyword>
<keyword id="KW-0597">Phosphoprotein</keyword>
<keyword id="KW-1185">Reference proteome</keyword>
<keyword id="KW-0677">Repeat</keyword>
<keyword id="KW-0728">SH3 domain</keyword>
<keyword id="KW-0862">Zinc</keyword>
<keyword id="KW-0863">Zinc-finger</keyword>
<gene>
    <name type="primary">Asap1</name>
    <name type="synonym">Ddef1</name>
    <name type="synonym">Kiaa1249</name>
    <name type="synonym">Shag1</name>
</gene>
<dbReference type="EMBL" id="AF075461">
    <property type="protein sequence ID" value="AAC98349.1"/>
    <property type="molecule type" value="mRNA"/>
</dbReference>
<dbReference type="EMBL" id="AF075462">
    <property type="protein sequence ID" value="AAC98350.1"/>
    <property type="molecule type" value="mRNA"/>
</dbReference>
<dbReference type="EMBL" id="AC098728">
    <property type="status" value="NOT_ANNOTATED_CDS"/>
    <property type="molecule type" value="Genomic_DNA"/>
</dbReference>
<dbReference type="EMBL" id="AC131710">
    <property type="status" value="NOT_ANNOTATED_CDS"/>
    <property type="molecule type" value="Genomic_DNA"/>
</dbReference>
<dbReference type="EMBL" id="AC156573">
    <property type="status" value="NOT_ANNOTATED_CDS"/>
    <property type="molecule type" value="Genomic_DNA"/>
</dbReference>
<dbReference type="EMBL" id="BC002201">
    <property type="protein sequence ID" value="AAH02201.1"/>
    <property type="status" value="ALT_INIT"/>
    <property type="molecule type" value="mRNA"/>
</dbReference>
<dbReference type="EMBL" id="BC048818">
    <property type="protein sequence ID" value="AAH48818.1"/>
    <property type="status" value="ALT_INIT"/>
    <property type="molecule type" value="mRNA"/>
</dbReference>
<dbReference type="EMBL" id="BC094581">
    <property type="protein sequence ID" value="AAH94581.1"/>
    <property type="molecule type" value="mRNA"/>
</dbReference>
<dbReference type="EMBL" id="AK122477">
    <property type="protein sequence ID" value="BAC65759.1"/>
    <property type="molecule type" value="mRNA"/>
</dbReference>
<dbReference type="EMBL" id="U92478">
    <property type="protein sequence ID" value="AAB82338.1"/>
    <property type="molecule type" value="mRNA"/>
</dbReference>
<dbReference type="CCDS" id="CCDS56986.1">
    <molecule id="Q9QWY8-1"/>
</dbReference>
<dbReference type="CCDS" id="CCDS70634.1">
    <molecule id="Q9QWY8-2"/>
</dbReference>
<dbReference type="PIR" id="T42627">
    <property type="entry name" value="T42627"/>
</dbReference>
<dbReference type="RefSeq" id="NP_001263390.1">
    <property type="nucleotide sequence ID" value="NM_001276461.1"/>
</dbReference>
<dbReference type="RefSeq" id="NP_001263391.1">
    <property type="nucleotide sequence ID" value="NM_001276462.1"/>
</dbReference>
<dbReference type="RefSeq" id="NP_001263396.1">
    <molecule id="Q9QWY8-2"/>
    <property type="nucleotide sequence ID" value="NM_001276467.2"/>
</dbReference>
<dbReference type="RefSeq" id="NP_001398114.1">
    <molecule id="Q9QWY8-4"/>
    <property type="nucleotide sequence ID" value="NM_001411185.1"/>
</dbReference>
<dbReference type="RefSeq" id="NP_034156.2">
    <molecule id="Q9QWY8-1"/>
    <property type="nucleotide sequence ID" value="NM_010026.4"/>
</dbReference>
<dbReference type="RefSeq" id="XP_036015010.1">
    <molecule id="Q9QWY8-3"/>
    <property type="nucleotide sequence ID" value="XM_036159117.1"/>
</dbReference>
<dbReference type="PDB" id="5C6R">
    <property type="method" value="X-ray"/>
    <property type="resolution" value="1.80 A"/>
    <property type="chains" value="A/B=325-451"/>
</dbReference>
<dbReference type="PDB" id="5C79">
    <property type="method" value="X-ray"/>
    <property type="resolution" value="1.60 A"/>
    <property type="chains" value="A/B=325-451"/>
</dbReference>
<dbReference type="PDB" id="8HLO">
    <property type="method" value="X-ray"/>
    <property type="resolution" value="1.17 A"/>
    <property type="chains" value="A=1087-1147"/>
</dbReference>
<dbReference type="PDB" id="8ZE8">
    <property type="method" value="X-ray"/>
    <property type="resolution" value="2.07 A"/>
    <property type="chains" value="A/B/D/G=1083-1147"/>
</dbReference>
<dbReference type="PDBsum" id="5C6R"/>
<dbReference type="PDBsum" id="5C79"/>
<dbReference type="PDBsum" id="8HLO"/>
<dbReference type="PDBsum" id="8ZE8"/>
<dbReference type="BMRB" id="Q9QWY8"/>
<dbReference type="SMR" id="Q9QWY8"/>
<dbReference type="BioGRID" id="199076">
    <property type="interactions" value="50"/>
</dbReference>
<dbReference type="FunCoup" id="Q9QWY8">
    <property type="interactions" value="1757"/>
</dbReference>
<dbReference type="IntAct" id="Q9QWY8">
    <property type="interactions" value="9"/>
</dbReference>
<dbReference type="MINT" id="Q9QWY8"/>
<dbReference type="STRING" id="10090.ENSMUSP00000134825"/>
<dbReference type="GlyGen" id="Q9QWY8">
    <property type="glycosylation" value="4 sites, 1 O-linked glycan (2 sites)"/>
</dbReference>
<dbReference type="iPTMnet" id="Q9QWY8"/>
<dbReference type="PhosphoSitePlus" id="Q9QWY8"/>
<dbReference type="SwissPalm" id="Q9QWY8"/>
<dbReference type="jPOST" id="Q9QWY8"/>
<dbReference type="PaxDb" id="10090-ENSMUSP00000134825"/>
<dbReference type="ProteomicsDB" id="281910">
    <molecule id="Q9QWY8-1"/>
</dbReference>
<dbReference type="ProteomicsDB" id="281911">
    <molecule id="Q9QWY8-2"/>
</dbReference>
<dbReference type="ProteomicsDB" id="281912">
    <molecule id="Q9QWY8-3"/>
</dbReference>
<dbReference type="ProteomicsDB" id="281913">
    <molecule id="Q9QWY8-4"/>
</dbReference>
<dbReference type="Pumba" id="Q9QWY8"/>
<dbReference type="Antibodypedia" id="27290">
    <property type="antibodies" value="232 antibodies from 29 providers"/>
</dbReference>
<dbReference type="DNASU" id="13196"/>
<dbReference type="Ensembl" id="ENSMUST00000110115.9">
    <molecule id="Q9QWY8-4"/>
    <property type="protein sequence ID" value="ENSMUSP00000105742.3"/>
    <property type="gene ID" value="ENSMUSG00000022377.17"/>
</dbReference>
<dbReference type="Ensembl" id="ENSMUST00000175793.8">
    <molecule id="Q9QWY8-3"/>
    <property type="protein sequence ID" value="ENSMUSP00000135718.2"/>
    <property type="gene ID" value="ENSMUSG00000022377.17"/>
</dbReference>
<dbReference type="Ensembl" id="ENSMUST00000176384.8">
    <molecule id="Q9QWY8-2"/>
    <property type="protein sequence ID" value="ENSMUSP00000135190.2"/>
    <property type="gene ID" value="ENSMUSG00000022377.17"/>
</dbReference>
<dbReference type="Ensembl" id="ENSMUST00000177374.8">
    <molecule id="Q9QWY8-1"/>
    <property type="protein sequence ID" value="ENSMUSP00000134825.2"/>
    <property type="gene ID" value="ENSMUSG00000022377.17"/>
</dbReference>
<dbReference type="GeneID" id="13196"/>
<dbReference type="KEGG" id="mmu:13196"/>
<dbReference type="UCSC" id="uc007vzh.2">
    <molecule id="Q9QWY8-3"/>
    <property type="organism name" value="mouse"/>
</dbReference>
<dbReference type="UCSC" id="uc007vzk.2">
    <molecule id="Q9QWY8-1"/>
    <property type="organism name" value="mouse"/>
</dbReference>
<dbReference type="UCSC" id="uc007vzl.2">
    <molecule id="Q9QWY8-2"/>
    <property type="organism name" value="mouse"/>
</dbReference>
<dbReference type="AGR" id="MGI:1342335"/>
<dbReference type="CTD" id="50807"/>
<dbReference type="MGI" id="MGI:1342335">
    <property type="gene designation" value="Asap1"/>
</dbReference>
<dbReference type="VEuPathDB" id="HostDB:ENSMUSG00000022377"/>
<dbReference type="eggNOG" id="KOG0521">
    <property type="taxonomic scope" value="Eukaryota"/>
</dbReference>
<dbReference type="GeneTree" id="ENSGT00940000158547"/>
<dbReference type="InParanoid" id="Q9QWY8"/>
<dbReference type="OMA" id="CAVKNGM"/>
<dbReference type="OrthoDB" id="435430at2759"/>
<dbReference type="PhylomeDB" id="Q9QWY8"/>
<dbReference type="TreeFam" id="TF325156"/>
<dbReference type="Reactome" id="R-MMU-5620916">
    <property type="pathway name" value="VxPx cargo-targeting to cilium"/>
</dbReference>
<dbReference type="BioGRID-ORCS" id="13196">
    <property type="hits" value="5 hits in 78 CRISPR screens"/>
</dbReference>
<dbReference type="CD-CODE" id="CE726F99">
    <property type="entry name" value="Postsynaptic density"/>
</dbReference>
<dbReference type="ChiTaRS" id="Asap1">
    <property type="organism name" value="mouse"/>
</dbReference>
<dbReference type="EvolutionaryTrace" id="Q9QWY8"/>
<dbReference type="PRO" id="PR:Q9QWY8"/>
<dbReference type="Proteomes" id="UP000000589">
    <property type="component" value="Chromosome 15"/>
</dbReference>
<dbReference type="RNAct" id="Q9QWY8">
    <property type="molecule type" value="protein"/>
</dbReference>
<dbReference type="Bgee" id="ENSMUSG00000022377">
    <property type="expression patterns" value="Expressed in saccule of membranous labyrinth and 258 other cell types or tissues"/>
</dbReference>
<dbReference type="ExpressionAtlas" id="Q9QWY8">
    <property type="expression patterns" value="baseline and differential"/>
</dbReference>
<dbReference type="GO" id="GO:0031253">
    <property type="term" value="C:cell projection membrane"/>
    <property type="evidence" value="ECO:0000314"/>
    <property type="project" value="MGI"/>
</dbReference>
<dbReference type="GO" id="GO:0005829">
    <property type="term" value="C:cytosol"/>
    <property type="evidence" value="ECO:0000314"/>
    <property type="project" value="MGI"/>
</dbReference>
<dbReference type="GO" id="GO:0043197">
    <property type="term" value="C:dendritic spine"/>
    <property type="evidence" value="ECO:0000314"/>
    <property type="project" value="MGI"/>
</dbReference>
<dbReference type="GO" id="GO:0098978">
    <property type="term" value="C:glutamatergic synapse"/>
    <property type="evidence" value="ECO:0000314"/>
    <property type="project" value="SynGO"/>
</dbReference>
<dbReference type="GO" id="GO:0000139">
    <property type="term" value="C:Golgi membrane"/>
    <property type="evidence" value="ECO:0000250"/>
    <property type="project" value="UniProtKB"/>
</dbReference>
<dbReference type="GO" id="GO:0005886">
    <property type="term" value="C:plasma membrane"/>
    <property type="evidence" value="ECO:0000314"/>
    <property type="project" value="MGI"/>
</dbReference>
<dbReference type="GO" id="GO:0002102">
    <property type="term" value="C:podosome"/>
    <property type="evidence" value="ECO:0000314"/>
    <property type="project" value="MGI"/>
</dbReference>
<dbReference type="GO" id="GO:0032588">
    <property type="term" value="C:trans-Golgi network membrane"/>
    <property type="evidence" value="ECO:0000250"/>
    <property type="project" value="UniProtKB"/>
</dbReference>
<dbReference type="GO" id="GO:0005096">
    <property type="term" value="F:GTPase activator activity"/>
    <property type="evidence" value="ECO:0000314"/>
    <property type="project" value="MGI"/>
</dbReference>
<dbReference type="GO" id="GO:0005547">
    <property type="term" value="F:phosphatidylinositol-3,4,5-trisphosphate binding"/>
    <property type="evidence" value="ECO:0000314"/>
    <property type="project" value="FlyBase"/>
</dbReference>
<dbReference type="GO" id="GO:0005546">
    <property type="term" value="F:phosphatidylinositol-4,5-bisphosphate binding"/>
    <property type="evidence" value="ECO:0000314"/>
    <property type="project" value="FlyBase"/>
</dbReference>
<dbReference type="GO" id="GO:0001786">
    <property type="term" value="F:phosphatidylserine binding"/>
    <property type="evidence" value="ECO:0000314"/>
    <property type="project" value="MGI"/>
</dbReference>
<dbReference type="GO" id="GO:0017124">
    <property type="term" value="F:SH3 domain binding"/>
    <property type="evidence" value="ECO:0000314"/>
    <property type="project" value="MGI"/>
</dbReference>
<dbReference type="GO" id="GO:0008270">
    <property type="term" value="F:zinc ion binding"/>
    <property type="evidence" value="ECO:0007669"/>
    <property type="project" value="UniProtKB-KW"/>
</dbReference>
<dbReference type="GO" id="GO:0060271">
    <property type="term" value="P:cilium assembly"/>
    <property type="evidence" value="ECO:0000250"/>
    <property type="project" value="UniProtKB"/>
</dbReference>
<dbReference type="GO" id="GO:0061000">
    <property type="term" value="P:negative regulation of dendritic spine development"/>
    <property type="evidence" value="ECO:0000314"/>
    <property type="project" value="MGI"/>
</dbReference>
<dbReference type="GO" id="GO:1903527">
    <property type="term" value="P:positive regulation of membrane tubulation"/>
    <property type="evidence" value="ECO:0000314"/>
    <property type="project" value="MGI"/>
</dbReference>
<dbReference type="GO" id="GO:0071803">
    <property type="term" value="P:positive regulation of podosome assembly"/>
    <property type="evidence" value="ECO:0000315"/>
    <property type="project" value="MGI"/>
</dbReference>
<dbReference type="GO" id="GO:0061512">
    <property type="term" value="P:protein localization to cilium"/>
    <property type="evidence" value="ECO:0000250"/>
    <property type="project" value="UniProtKB"/>
</dbReference>
<dbReference type="GO" id="GO:0099175">
    <property type="term" value="P:regulation of postsynapse organization"/>
    <property type="evidence" value="ECO:0000314"/>
    <property type="project" value="SynGO"/>
</dbReference>
<dbReference type="CDD" id="cd08848">
    <property type="entry name" value="ArfGap_ASAP1"/>
    <property type="match status" value="1"/>
</dbReference>
<dbReference type="CDD" id="cd07641">
    <property type="entry name" value="BAR_ASAP1"/>
    <property type="match status" value="1"/>
</dbReference>
<dbReference type="CDD" id="cd13251">
    <property type="entry name" value="PH_ASAP"/>
    <property type="match status" value="1"/>
</dbReference>
<dbReference type="CDD" id="cd11965">
    <property type="entry name" value="SH3_ASAP1"/>
    <property type="match status" value="1"/>
</dbReference>
<dbReference type="FunFam" id="1.20.1270.60:FF:000004">
    <property type="entry name" value="Arf-GAP with SH3 domain, ANK repeat and PH domain-containing protein 1"/>
    <property type="match status" value="1"/>
</dbReference>
<dbReference type="FunFam" id="1.25.40.950:FF:000001">
    <property type="entry name" value="Arf-GAP with SH3 domain, ANK repeat and PH domain-containing protein 1"/>
    <property type="match status" value="1"/>
</dbReference>
<dbReference type="FunFam" id="1.10.220.150:FF:000002">
    <property type="entry name" value="arf-GAP with SH3 domain, ANK repeat and PH domain-containing protein 1"/>
    <property type="match status" value="1"/>
</dbReference>
<dbReference type="FunFam" id="1.25.40.20:FF:000006">
    <property type="entry name" value="Arf-GAP with SH3 domain, ANK repeat and PH domain-containing protein 2"/>
    <property type="match status" value="1"/>
</dbReference>
<dbReference type="FunFam" id="2.30.29.30:FF:000012">
    <property type="entry name" value="Arf-GAP with SH3 domain, ANK repeat and PH domain-containing protein 2"/>
    <property type="match status" value="1"/>
</dbReference>
<dbReference type="FunFam" id="2.30.30.40:FF:000012">
    <property type="entry name" value="Arf-GAP with SH3 domain, ANK repeat and PH domain-containing protein 2"/>
    <property type="match status" value="1"/>
</dbReference>
<dbReference type="Gene3D" id="1.25.40.950">
    <property type="match status" value="1"/>
</dbReference>
<dbReference type="Gene3D" id="1.25.40.20">
    <property type="entry name" value="Ankyrin repeat-containing domain"/>
    <property type="match status" value="1"/>
</dbReference>
<dbReference type="Gene3D" id="1.10.220.150">
    <property type="entry name" value="Arf GTPase activating protein"/>
    <property type="match status" value="1"/>
</dbReference>
<dbReference type="Gene3D" id="1.20.1270.60">
    <property type="entry name" value="Arfaptin homology (AH) domain/BAR domain"/>
    <property type="match status" value="1"/>
</dbReference>
<dbReference type="Gene3D" id="2.30.29.30">
    <property type="entry name" value="Pleckstrin-homology domain (PH domain)/Phosphotyrosine-binding domain (PTB)"/>
    <property type="match status" value="1"/>
</dbReference>
<dbReference type="Gene3D" id="2.30.30.40">
    <property type="entry name" value="SH3 Domains"/>
    <property type="match status" value="1"/>
</dbReference>
<dbReference type="InterPro" id="IPR027267">
    <property type="entry name" value="AH/BAR_dom_sf"/>
</dbReference>
<dbReference type="InterPro" id="IPR002110">
    <property type="entry name" value="Ankyrin_rpt"/>
</dbReference>
<dbReference type="InterPro" id="IPR036770">
    <property type="entry name" value="Ankyrin_rpt-contain_sf"/>
</dbReference>
<dbReference type="InterPro" id="IPR037278">
    <property type="entry name" value="ARFGAP/RecO"/>
</dbReference>
<dbReference type="InterPro" id="IPR001164">
    <property type="entry name" value="ArfGAP_dom"/>
</dbReference>
<dbReference type="InterPro" id="IPR038508">
    <property type="entry name" value="ArfGAP_dom_sf"/>
</dbReference>
<dbReference type="InterPro" id="IPR043593">
    <property type="entry name" value="ASAP"/>
</dbReference>
<dbReference type="InterPro" id="IPR037928">
    <property type="entry name" value="ASAP1_BAR"/>
</dbReference>
<dbReference type="InterPro" id="IPR038016">
    <property type="entry name" value="ASAP1_SH3"/>
</dbReference>
<dbReference type="InterPro" id="IPR004148">
    <property type="entry name" value="BAR_dom"/>
</dbReference>
<dbReference type="InterPro" id="IPR011993">
    <property type="entry name" value="PH-like_dom_sf"/>
</dbReference>
<dbReference type="InterPro" id="IPR037844">
    <property type="entry name" value="PH_ASAP"/>
</dbReference>
<dbReference type="InterPro" id="IPR001849">
    <property type="entry name" value="PH_domain"/>
</dbReference>
<dbReference type="InterPro" id="IPR036028">
    <property type="entry name" value="SH3-like_dom_sf"/>
</dbReference>
<dbReference type="InterPro" id="IPR001452">
    <property type="entry name" value="SH3_domain"/>
</dbReference>
<dbReference type="PANTHER" id="PTHR45854:SF2">
    <property type="entry name" value="ARF-GAP WITH SH3 DOMAIN, ANK REPEAT AND PH DOMAIN-CONTAINING PROTEIN 1"/>
    <property type="match status" value="1"/>
</dbReference>
<dbReference type="PANTHER" id="PTHR45854">
    <property type="entry name" value="ASAP FAMILY MEMBER"/>
    <property type="match status" value="1"/>
</dbReference>
<dbReference type="Pfam" id="PF12796">
    <property type="entry name" value="Ank_2"/>
    <property type="match status" value="1"/>
</dbReference>
<dbReference type="Pfam" id="PF01412">
    <property type="entry name" value="ArfGap"/>
    <property type="match status" value="1"/>
</dbReference>
<dbReference type="Pfam" id="PF16746">
    <property type="entry name" value="BAR_3"/>
    <property type="match status" value="1"/>
</dbReference>
<dbReference type="Pfam" id="PF00169">
    <property type="entry name" value="PH"/>
    <property type="match status" value="1"/>
</dbReference>
<dbReference type="Pfam" id="PF14604">
    <property type="entry name" value="SH3_9"/>
    <property type="match status" value="1"/>
</dbReference>
<dbReference type="PRINTS" id="PR00405">
    <property type="entry name" value="REVINTRACTNG"/>
</dbReference>
<dbReference type="SMART" id="SM00248">
    <property type="entry name" value="ANK"/>
    <property type="match status" value="2"/>
</dbReference>
<dbReference type="SMART" id="SM00105">
    <property type="entry name" value="ArfGap"/>
    <property type="match status" value="1"/>
</dbReference>
<dbReference type="SMART" id="SM00233">
    <property type="entry name" value="PH"/>
    <property type="match status" value="1"/>
</dbReference>
<dbReference type="SMART" id="SM00326">
    <property type="entry name" value="SH3"/>
    <property type="match status" value="1"/>
</dbReference>
<dbReference type="SUPFAM" id="SSF48403">
    <property type="entry name" value="Ankyrin repeat"/>
    <property type="match status" value="1"/>
</dbReference>
<dbReference type="SUPFAM" id="SSF57863">
    <property type="entry name" value="ArfGap/RecO-like zinc finger"/>
    <property type="match status" value="1"/>
</dbReference>
<dbReference type="SUPFAM" id="SSF103657">
    <property type="entry name" value="BAR/IMD domain-like"/>
    <property type="match status" value="1"/>
</dbReference>
<dbReference type="SUPFAM" id="SSF50729">
    <property type="entry name" value="PH domain-like"/>
    <property type="match status" value="1"/>
</dbReference>
<dbReference type="SUPFAM" id="SSF50044">
    <property type="entry name" value="SH3-domain"/>
    <property type="match status" value="1"/>
</dbReference>
<dbReference type="PROSITE" id="PS50297">
    <property type="entry name" value="ANK_REP_REGION"/>
    <property type="match status" value="1"/>
</dbReference>
<dbReference type="PROSITE" id="PS50088">
    <property type="entry name" value="ANK_REPEAT"/>
    <property type="match status" value="2"/>
</dbReference>
<dbReference type="PROSITE" id="PS50115">
    <property type="entry name" value="ARFGAP"/>
    <property type="match status" value="1"/>
</dbReference>
<dbReference type="PROSITE" id="PS50003">
    <property type="entry name" value="PH_DOMAIN"/>
    <property type="match status" value="1"/>
</dbReference>
<dbReference type="PROSITE" id="PS50002">
    <property type="entry name" value="SH3"/>
    <property type="match status" value="1"/>
</dbReference>
<proteinExistence type="evidence at protein level"/>
<name>ASAP1_MOUSE</name>
<reference key="1">
    <citation type="journal article" date="1998" name="Mol. Cell. Biol.">
        <title>ASAP1, a phospholipid-dependent arf GTPase-activating protein that associates with and is phosphorylated by Src.</title>
        <authorList>
            <person name="Brown M.T."/>
            <person name="Andrade J."/>
            <person name="Radhakrishna H."/>
            <person name="Donaldson J.G."/>
            <person name="Cooper J.A."/>
            <person name="Randazzo P.A."/>
        </authorList>
    </citation>
    <scope>NUCLEOTIDE SEQUENCE [MRNA] (ISOFORMS 1 AND 2)</scope>
    <scope>CHARACTERIZATION</scope>
    <scope>MUTAGENESIS OF ARG-811; PRO-910 AND PRO-913</scope>
    <source>
        <tissue>Brain</tissue>
        <tissue>Embryo</tissue>
    </source>
</reference>
<reference key="2">
    <citation type="journal article" date="2009" name="PLoS Biol.">
        <title>Lineage-specific biology revealed by a finished genome assembly of the mouse.</title>
        <authorList>
            <person name="Church D.M."/>
            <person name="Goodstadt L."/>
            <person name="Hillier L.W."/>
            <person name="Zody M.C."/>
            <person name="Goldstein S."/>
            <person name="She X."/>
            <person name="Bult C.J."/>
            <person name="Agarwala R."/>
            <person name="Cherry J.L."/>
            <person name="DiCuccio M."/>
            <person name="Hlavina W."/>
            <person name="Kapustin Y."/>
            <person name="Meric P."/>
            <person name="Maglott D."/>
            <person name="Birtle Z."/>
            <person name="Marques A.C."/>
            <person name="Graves T."/>
            <person name="Zhou S."/>
            <person name="Teague B."/>
            <person name="Potamousis K."/>
            <person name="Churas C."/>
            <person name="Place M."/>
            <person name="Herschleb J."/>
            <person name="Runnheim R."/>
            <person name="Forrest D."/>
            <person name="Amos-Landgraf J."/>
            <person name="Schwartz D.C."/>
            <person name="Cheng Z."/>
            <person name="Lindblad-Toh K."/>
            <person name="Eichler E.E."/>
            <person name="Ponting C.P."/>
        </authorList>
    </citation>
    <scope>NUCLEOTIDE SEQUENCE [LARGE SCALE GENOMIC DNA]</scope>
    <source>
        <strain>C57BL/6J</strain>
    </source>
</reference>
<reference key="3">
    <citation type="journal article" date="2004" name="Genome Res.">
        <title>The status, quality, and expansion of the NIH full-length cDNA project: the Mammalian Gene Collection (MGC).</title>
        <authorList>
            <consortium name="The MGC Project Team"/>
        </authorList>
    </citation>
    <scope>NUCLEOTIDE SEQUENCE [LARGE SCALE MRNA] (ISOFORM 1)</scope>
    <scope>NUCLEOTIDE SEQUENCE [LARGE SCALE MRNA] OF 20-1147 (ISOFORM 4)</scope>
    <source>
        <strain>C57BL/6J</strain>
        <tissue>Eye</tissue>
        <tissue>Mammary tumor</tissue>
    </source>
</reference>
<reference key="4">
    <citation type="journal article" date="2003" name="DNA Res.">
        <title>Prediction of the coding sequences of mouse homologues of KIAA gene: II. The complete nucleotide sequences of 400 mouse KIAA-homologous cDNAs identified by screening of terminal sequences of cDNA clones randomly sampled from size-fractionated libraries.</title>
        <authorList>
            <person name="Okazaki N."/>
            <person name="Kikuno R."/>
            <person name="Ohara R."/>
            <person name="Inamoto S."/>
            <person name="Aizawa H."/>
            <person name="Yuasa S."/>
            <person name="Nakajima D."/>
            <person name="Nagase T."/>
            <person name="Ohara O."/>
            <person name="Koga H."/>
        </authorList>
    </citation>
    <scope>NUCLEOTIDE SEQUENCE [LARGE SCALE MRNA] OF 57-1147 (ISOFORM 3)</scope>
    <source>
        <tissue>Brain</tissue>
    </source>
</reference>
<reference key="5">
    <citation type="journal article" date="1997" name="Anal. Biochem.">
        <title>Examining the specificity of Src homology 3 domain -- ligand interactions with alkaline phosphatase fusion proteins.</title>
        <authorList>
            <person name="Yamabhai M."/>
            <person name="Kay B.K."/>
        </authorList>
    </citation>
    <scope>NUCLEOTIDE SEQUENCE [MRNA] OF 654-1147 (ISOFORM 1)</scope>
</reference>
<reference key="6">
    <citation type="journal article" date="1999" name="Mol. Cell. Biol.">
        <title>DEF-1, a novel src SH3 binding protein that promotes adipogenesis in fibroblastic cell lines.</title>
        <authorList>
            <person name="King F.J."/>
            <person name="Hu E."/>
            <person name="Harris D.F."/>
            <person name="Sarraf P."/>
            <person name="Spiegelman B.M."/>
            <person name="Roberts T.M."/>
        </authorList>
    </citation>
    <scope>TISSUE SPECIFICITY</scope>
</reference>
<reference key="7">
    <citation type="journal article" date="2002" name="J. Biol. Chem.">
        <title>Interaction of POB1, a downstream molecule of small G protein Ral, with PAG2, a paxillin-binding protein, is involved in cell migration.</title>
        <authorList>
            <person name="Oshiro T."/>
            <person name="Koyama S."/>
            <person name="Sugiyama S."/>
            <person name="Kondo A."/>
            <person name="Onodera Y."/>
            <person name="Asahara T."/>
            <person name="Sabe H."/>
            <person name="Kikuchi A."/>
        </authorList>
    </citation>
    <scope>INTERACTION WITH REPS2</scope>
</reference>
<reference key="8">
    <citation type="journal article" date="2003" name="J. Biol. Chem.">
        <title>The tyrosine kinase Pyk2 regulates Arf1 activity by phosphorylation and inhibition of the Arf-GTPase-activating protein ASAP1.</title>
        <authorList>
            <person name="Kruljac-Letunic A."/>
            <person name="Moelleken J."/>
            <person name="Kallin A."/>
            <person name="Wieland F."/>
            <person name="Blaukat A."/>
        </authorList>
    </citation>
    <scope>PHOSPHORYLATION AT TYR-308</scope>
    <scope>INTERACTION WITH PTK2B/PYK2</scope>
</reference>
<reference key="9">
    <citation type="journal article" date="2007" name="Proc. Natl. Acad. Sci. U.S.A.">
        <title>Large-scale phosphorylation analysis of mouse liver.</title>
        <authorList>
            <person name="Villen J."/>
            <person name="Beausoleil S.A."/>
            <person name="Gerber S.A."/>
            <person name="Gygi S.P."/>
        </authorList>
    </citation>
    <scope>PHOSPHORYLATION [LARGE SCALE ANALYSIS] AT SER-732 AND SER-858</scope>
    <scope>IDENTIFICATION BY MASS SPECTROMETRY [LARGE SCALE ANALYSIS]</scope>
    <source>
        <tissue>Liver</tissue>
    </source>
</reference>
<reference key="10">
    <citation type="journal article" date="2008" name="Mol. Biol. Cell">
        <title>Arf GTPase-activating protein ASAP1 interacts with Rab11 effector FIP3 and regulates pericentrosomal localization of transferrin receptor-positive recycling endosome.</title>
        <authorList>
            <person name="Inoue H."/>
            <person name="Ha V.L."/>
            <person name="Prekeris R."/>
            <person name="Randazzo P.A."/>
        </authorList>
    </citation>
    <scope>INTERACTION WITH RAB11FIP3</scope>
</reference>
<reference key="11">
    <citation type="journal article" date="2010" name="Cell">
        <title>A tissue-specific atlas of mouse protein phosphorylation and expression.</title>
        <authorList>
            <person name="Huttlin E.L."/>
            <person name="Jedrychowski M.P."/>
            <person name="Elias J.E."/>
            <person name="Goswami T."/>
            <person name="Rad R."/>
            <person name="Beausoleil S.A."/>
            <person name="Villen J."/>
            <person name="Haas W."/>
            <person name="Sowa M.E."/>
            <person name="Gygi S.P."/>
        </authorList>
    </citation>
    <scope>PHOSPHORYLATION [LARGE SCALE ANALYSIS] AT SER-732; SER-858; SER-1045; SER-1059; THR-1066 AND SER-1146</scope>
    <scope>IDENTIFICATION BY MASS SPECTROMETRY [LARGE SCALE ANALYSIS]</scope>
    <source>
        <tissue>Brain</tissue>
        <tissue>Brown adipose tissue</tissue>
        <tissue>Heart</tissue>
        <tissue>Kidney</tissue>
        <tissue>Liver</tissue>
        <tissue>Lung</tissue>
        <tissue>Pancreas</tissue>
        <tissue>Spleen</tissue>
        <tissue>Testis</tissue>
    </source>
</reference>
<sequence length="1147" mass="127421">MRSSASRLSSFSSRDSLWNRMPDQISVSEFIAETTEDYNSPTTSSFTTRLHNCRNTVTLLEEALDQDRTALQKVKKSVKAIYNSGQDHVQNEENYAQVLDKFGSNFLSRDNPDLGTAFVKFSTLTKELSTLLKNLLQGLSHNVIFTLDSLLKGDLKGVKGDLKKPFDKAWKDYETKFTKIEKEKREHAKQHGMIRTEITGAEIAEEMEKERRLFQLQMCEYLIKVNEIKTKKGVDLLQNLIKYYHAQCNFFQDGLKTADKLKQYIEKLAADLYNIKQTQDEEKKQLTALRDLIKSSLQLDPKEVGGLYVASRANSSRRDSQSRQGGYSMHQLQGNKEYGSEKKGFLLKKSDGIRKVWQRRKCAVKNGILTISHATSNRQPAKLNLLTCQVKPNAEDKKSFDLISHNRTYHFQAEDEQDYIAWISVLTNSKEEALTMAFRGEQSTGENSLEDLTKAIIEDVQRLPGNDICCDCGSSEPTWLSTNLGILTCIECSGIHREMGVHISRIQSLELDKLGTSELLLAKNVGNNSFNDIMEANLPSPSPKPTPSSDMTVRKEYITAKYVDHRFSRKTCASSSAKLNELLEAIKSRDLLALIQVYAEGVELMEPLLEPGQELGETALHLAVRTADQTSLHLVDFLVQNCGNLDKQTSVGNTVLHYCSMYGKPECLKLLLRSKPTVDIVNQNGETALDIAKRLKATQCEDLLSQAKSGKFNPHVHVEYEWNLRQDEMDESDDDLDDKPSPIKKERSPRPQSFCHSSSISPQDKLALPGFSTPRDKQRLSYGAFTNQIFASTSTDLPTSPTSEAPPLPPRNAGKGPTGPPSTLPLGTQTSSGSSTLSKKRPPPPPPGHKRTLSDPPSPLPHGPPNKGAIPWGNDVGPLSSSKTANKFEGLSQQASTSSAKTALGPRVLPKLPQKVALRKTETSHHLSLDRTNIPPETFQKSSQLTELPQKPPLGELPPKPVELAPKPQVGELPPKPGELPPKPQLGDLPPKPQLSDLPPKPQMKDLPPKPQLGDLLAKSQAGDVSAKVQPPSEVTQRSHTGDLSPNVQSRDAIQKQASEDSNDLTPTLPETPVPLPRKINTGKNKVRRVKTIYDCQADNDDELTFIEGEVIIVTGEEDQEWWIGHIEGQPERKGVFPVSFVHILSD</sequence>
<feature type="chain" id="PRO_0000074197" description="Arf-GAP with SH3 domain, ANK repeat and PH domain-containing protein 1">
    <location>
        <begin position="1"/>
        <end position="1147"/>
    </location>
</feature>
<feature type="domain" description="PH" evidence="4">
    <location>
        <begin position="339"/>
        <end position="431"/>
    </location>
</feature>
<feature type="domain" description="Arf-GAP" evidence="6">
    <location>
        <begin position="454"/>
        <end position="577"/>
    </location>
</feature>
<feature type="repeat" description="ANK 1">
    <location>
        <begin position="615"/>
        <end position="647"/>
    </location>
</feature>
<feature type="repeat" description="ANK 2">
    <location>
        <begin position="651"/>
        <end position="680"/>
    </location>
</feature>
<feature type="domain" description="SH3" evidence="5">
    <location>
        <begin position="1085"/>
        <end position="1147"/>
    </location>
</feature>
<feature type="zinc finger region" description="C4-type" evidence="6">
    <location>
        <begin position="469"/>
        <end position="492"/>
    </location>
</feature>
<feature type="region of interest" description="Disordered" evidence="7">
    <location>
        <begin position="310"/>
        <end position="333"/>
    </location>
</feature>
<feature type="region of interest" description="Disordered" evidence="7">
    <location>
        <begin position="725"/>
        <end position="775"/>
    </location>
</feature>
<feature type="region of interest" description="Disordered" evidence="7">
    <location>
        <begin position="792"/>
        <end position="1080"/>
    </location>
</feature>
<feature type="compositionally biased region" description="Acidic residues" evidence="7">
    <location>
        <begin position="728"/>
        <end position="737"/>
    </location>
</feature>
<feature type="compositionally biased region" description="Basic and acidic residues" evidence="7">
    <location>
        <begin position="738"/>
        <end position="749"/>
    </location>
</feature>
<feature type="compositionally biased region" description="Polar residues" evidence="7">
    <location>
        <begin position="750"/>
        <end position="762"/>
    </location>
</feature>
<feature type="compositionally biased region" description="Low complexity" evidence="7">
    <location>
        <begin position="792"/>
        <end position="803"/>
    </location>
</feature>
<feature type="compositionally biased region" description="Low complexity" evidence="7">
    <location>
        <begin position="824"/>
        <end position="837"/>
    </location>
</feature>
<feature type="compositionally biased region" description="Low complexity" evidence="7">
    <location>
        <begin position="892"/>
        <end position="903"/>
    </location>
</feature>
<feature type="compositionally biased region" description="Basic and acidic residues" evidence="7">
    <location>
        <begin position="919"/>
        <end position="929"/>
    </location>
</feature>
<feature type="compositionally biased region" description="Pro residues" evidence="7">
    <location>
        <begin position="950"/>
        <end position="961"/>
    </location>
</feature>
<feature type="compositionally biased region" description="Pro residues" evidence="7">
    <location>
        <begin position="974"/>
        <end position="984"/>
    </location>
</feature>
<feature type="compositionally biased region" description="Polar residues" evidence="7">
    <location>
        <begin position="1033"/>
        <end position="1052"/>
    </location>
</feature>
<feature type="modified residue" description="Phosphotyrosine; by FAK2" evidence="10">
    <location>
        <position position="308"/>
    </location>
</feature>
<feature type="modified residue" description="Phosphoserine" evidence="17 18">
    <location>
        <position position="732"/>
    </location>
</feature>
<feature type="modified residue" description="Phosphoserine" evidence="2">
    <location>
        <position position="741"/>
    </location>
</feature>
<feature type="modified residue" description="Phosphoserine" evidence="3">
    <location>
        <position position="854"/>
    </location>
</feature>
<feature type="modified residue" description="Phosphoserine" evidence="17 18">
    <location>
        <position position="858"/>
    </location>
</feature>
<feature type="modified residue" description="Phosphoserine" evidence="3">
    <location>
        <position position="1026"/>
    </location>
</feature>
<feature type="modified residue" description="Phosphoserine" evidence="18">
    <location>
        <position position="1045"/>
    </location>
</feature>
<feature type="modified residue" description="Phosphoserine" evidence="18">
    <location>
        <position position="1059"/>
    </location>
</feature>
<feature type="modified residue" description="Phosphothreonine" evidence="18">
    <location>
        <position position="1066"/>
    </location>
</feature>
<feature type="modified residue" description="Phosphoserine" evidence="18">
    <location>
        <position position="1146"/>
    </location>
</feature>
<feature type="splice variant" id="VSP_008367" description="In isoform 4." evidence="14">
    <location>
        <begin position="304"/>
        <end position="318"/>
    </location>
</feature>
<feature type="splice variant" id="VSP_008366" description="In isoform 3." evidence="13">
    <location>
        <begin position="304"/>
        <end position="315"/>
    </location>
</feature>
<feature type="splice variant" id="VSP_008368" description="In isoform 2." evidence="15">
    <location>
        <begin position="816"/>
        <end position="872"/>
    </location>
</feature>
<feature type="mutagenesis site" description="Significant reduction in binding to SRC and CRK and loss of phosphorylation. Loss of binding and phosphorylation; when associated with A-910 and A-913." evidence="12">
    <original>R</original>
    <variation>A</variation>
    <location>
        <position position="811"/>
    </location>
</feature>
<feature type="mutagenesis site" description="Significant reduction in binding to SRC and CRK and decrease in phosphorylation; when associated with A-913. Loss of binding and phosphorylation; when associated with A-811 and A-913." evidence="12">
    <original>P</original>
    <variation>A</variation>
    <location>
        <position position="910"/>
    </location>
</feature>
<feature type="mutagenesis site" description="Significant reduction in binding to SRC and CRK and decrease in phosphorylation; when associated with A-910. Loss of binding and phosphorylation; when associated with A-811 and A-910." evidence="12">
    <original>P</original>
    <variation>A</variation>
    <location>
        <position position="913"/>
    </location>
</feature>
<feature type="sequence conflict" description="In Ref. 5; AAB82338." evidence="16" ref="5">
    <original>T</original>
    <variation>S</variation>
    <location>
        <position position="654"/>
    </location>
</feature>
<feature type="sequence conflict" description="In Ref. 1; AAC98349/AAC98350." evidence="16" ref="1">
    <original>L</original>
    <variation>S</variation>
    <location>
        <position position="879"/>
    </location>
</feature>
<feature type="sequence conflict" description="In Ref. 5; AAB82338." evidence="16" ref="5">
    <original>R</original>
    <variation>I</variation>
    <location>
        <position position="1051"/>
    </location>
</feature>
<feature type="helix" evidence="20">
    <location>
        <begin position="335"/>
        <end position="337"/>
    </location>
</feature>
<feature type="strand" evidence="20">
    <location>
        <begin position="342"/>
        <end position="349"/>
    </location>
</feature>
<feature type="strand" evidence="19">
    <location>
        <begin position="351"/>
        <end position="354"/>
    </location>
</feature>
<feature type="strand" evidence="20">
    <location>
        <begin position="357"/>
        <end position="365"/>
    </location>
</feature>
<feature type="strand" evidence="20">
    <location>
        <begin position="368"/>
        <end position="371"/>
    </location>
</feature>
<feature type="strand" evidence="19">
    <location>
        <begin position="374"/>
        <end position="378"/>
    </location>
</feature>
<feature type="strand" evidence="20">
    <location>
        <begin position="381"/>
        <end position="384"/>
    </location>
</feature>
<feature type="helix" evidence="20">
    <location>
        <begin position="385"/>
        <end position="387"/>
    </location>
</feature>
<feature type="strand" evidence="20">
    <location>
        <begin position="389"/>
        <end position="392"/>
    </location>
</feature>
<feature type="strand" evidence="20">
    <location>
        <begin position="394"/>
        <end position="404"/>
    </location>
</feature>
<feature type="strand" evidence="20">
    <location>
        <begin position="407"/>
        <end position="412"/>
    </location>
</feature>
<feature type="helix" evidence="20">
    <location>
        <begin position="416"/>
        <end position="436"/>
    </location>
</feature>
<feature type="strand" evidence="21">
    <location>
        <begin position="1089"/>
        <end position="1092"/>
    </location>
</feature>
<feature type="strand" evidence="21">
    <location>
        <begin position="1111"/>
        <end position="1127"/>
    </location>
</feature>
<feature type="strand" evidence="21">
    <location>
        <begin position="1130"/>
        <end position="1138"/>
    </location>
</feature>
<feature type="helix" evidence="21">
    <location>
        <begin position="1139"/>
        <end position="1141"/>
    </location>
</feature>
<feature type="strand" evidence="21">
    <location>
        <begin position="1142"/>
        <end position="1145"/>
    </location>
</feature>
<evidence type="ECO:0000250" key="1"/>
<evidence type="ECO:0000250" key="2">
    <source>
        <dbReference type="UniProtKB" id="Q1AAU6"/>
    </source>
</evidence>
<evidence type="ECO:0000250" key="3">
    <source>
        <dbReference type="UniProtKB" id="Q9ULH1"/>
    </source>
</evidence>
<evidence type="ECO:0000255" key="4">
    <source>
        <dbReference type="PROSITE-ProRule" id="PRU00145"/>
    </source>
</evidence>
<evidence type="ECO:0000255" key="5">
    <source>
        <dbReference type="PROSITE-ProRule" id="PRU00192"/>
    </source>
</evidence>
<evidence type="ECO:0000255" key="6">
    <source>
        <dbReference type="PROSITE-ProRule" id="PRU00288"/>
    </source>
</evidence>
<evidence type="ECO:0000256" key="7">
    <source>
        <dbReference type="SAM" id="MobiDB-lite"/>
    </source>
</evidence>
<evidence type="ECO:0000269" key="8">
    <source>
    </source>
</evidence>
<evidence type="ECO:0000269" key="9">
    <source>
    </source>
</evidence>
<evidence type="ECO:0000269" key="10">
    <source>
    </source>
</evidence>
<evidence type="ECO:0000269" key="11">
    <source>
    </source>
</evidence>
<evidence type="ECO:0000269" key="12">
    <source>
    </source>
</evidence>
<evidence type="ECO:0000303" key="13">
    <source>
    </source>
</evidence>
<evidence type="ECO:0000303" key="14">
    <source>
    </source>
</evidence>
<evidence type="ECO:0000303" key="15">
    <source>
    </source>
</evidence>
<evidence type="ECO:0000305" key="16"/>
<evidence type="ECO:0007744" key="17">
    <source>
    </source>
</evidence>
<evidence type="ECO:0007744" key="18">
    <source>
    </source>
</evidence>
<evidence type="ECO:0007829" key="19">
    <source>
        <dbReference type="PDB" id="5C6R"/>
    </source>
</evidence>
<evidence type="ECO:0007829" key="20">
    <source>
        <dbReference type="PDB" id="5C79"/>
    </source>
</evidence>
<evidence type="ECO:0007829" key="21">
    <source>
        <dbReference type="PDB" id="8HLO"/>
    </source>
</evidence>
<protein>
    <recommendedName>
        <fullName>Arf-GAP with SH3 domain, ANK repeat and PH domain-containing protein 1</fullName>
    </recommendedName>
    <alternativeName>
        <fullName>130 kDa phosphatidylinositol 4,5-bisphosphate-dependent ARF1 GTPase-activating protein</fullName>
    </alternativeName>
    <alternativeName>
        <fullName>ADP-ribosylation factor-directed GTPase-activating protein 1</fullName>
        <shortName>ARF GTPase-activating protein 1</shortName>
    </alternativeName>
    <alternativeName>
        <fullName>Development and differentiation-enhancing factor 1</fullName>
        <shortName>DEF-1</shortName>
        <shortName>Differentiation-enhancing factor 1</shortName>
    </alternativeName>
    <alternativeName>
        <fullName>PIP2-dependent ARF1 GAP</fullName>
    </alternativeName>
</protein>
<organism>
    <name type="scientific">Mus musculus</name>
    <name type="common">Mouse</name>
    <dbReference type="NCBI Taxonomy" id="10090"/>
    <lineage>
        <taxon>Eukaryota</taxon>
        <taxon>Metazoa</taxon>
        <taxon>Chordata</taxon>
        <taxon>Craniata</taxon>
        <taxon>Vertebrata</taxon>
        <taxon>Euteleostomi</taxon>
        <taxon>Mammalia</taxon>
        <taxon>Eutheria</taxon>
        <taxon>Euarchontoglires</taxon>
        <taxon>Glires</taxon>
        <taxon>Rodentia</taxon>
        <taxon>Myomorpha</taxon>
        <taxon>Muroidea</taxon>
        <taxon>Muridae</taxon>
        <taxon>Murinae</taxon>
        <taxon>Mus</taxon>
        <taxon>Mus</taxon>
    </lineage>
</organism>